<gene>
    <name type="ordered locus">CNI00630</name>
</gene>
<proteinExistence type="inferred from homology"/>
<protein>
    <recommendedName>
        <fullName evidence="1">U1 small nuclear ribonucleoprotein C</fullName>
        <shortName evidence="1">U1 snRNP C</shortName>
        <shortName evidence="1">U1-C</shortName>
        <shortName evidence="1">U1C</shortName>
    </recommendedName>
</protein>
<evidence type="ECO:0000255" key="1">
    <source>
        <dbReference type="HAMAP-Rule" id="MF_03153"/>
    </source>
</evidence>
<evidence type="ECO:0000256" key="2">
    <source>
        <dbReference type="SAM" id="MobiDB-lite"/>
    </source>
</evidence>
<feature type="chain" id="PRO_0000414287" description="U1 small nuclear ribonucleoprotein C">
    <location>
        <begin position="1"/>
        <end position="220"/>
    </location>
</feature>
<feature type="zinc finger region" description="Matrin-type" evidence="1">
    <location>
        <begin position="4"/>
        <end position="36"/>
    </location>
</feature>
<feature type="region of interest" description="Disordered" evidence="2">
    <location>
        <begin position="88"/>
        <end position="220"/>
    </location>
</feature>
<feature type="compositionally biased region" description="Pro residues" evidence="2">
    <location>
        <begin position="88"/>
        <end position="130"/>
    </location>
</feature>
<feature type="compositionally biased region" description="Pro residues" evidence="2">
    <location>
        <begin position="147"/>
        <end position="165"/>
    </location>
</feature>
<feature type="compositionally biased region" description="Low complexity" evidence="2">
    <location>
        <begin position="166"/>
        <end position="200"/>
    </location>
</feature>
<feature type="compositionally biased region" description="Basic and acidic residues" evidence="2">
    <location>
        <begin position="211"/>
        <end position="220"/>
    </location>
</feature>
<keyword id="KW-0479">Metal-binding</keyword>
<keyword id="KW-0539">Nucleus</keyword>
<keyword id="KW-1185">Reference proteome</keyword>
<keyword id="KW-0687">Ribonucleoprotein</keyword>
<keyword id="KW-0694">RNA-binding</keyword>
<keyword id="KW-0862">Zinc</keyword>
<keyword id="KW-0863">Zinc-finger</keyword>
<accession>Q5KC16</accession>
<accession>Q55NM9</accession>
<organism>
    <name type="scientific">Cryptococcus neoformans var. neoformans serotype D (strain JEC21 / ATCC MYA-565)</name>
    <name type="common">Filobasidiella neoformans</name>
    <dbReference type="NCBI Taxonomy" id="214684"/>
    <lineage>
        <taxon>Eukaryota</taxon>
        <taxon>Fungi</taxon>
        <taxon>Dikarya</taxon>
        <taxon>Basidiomycota</taxon>
        <taxon>Agaricomycotina</taxon>
        <taxon>Tremellomycetes</taxon>
        <taxon>Tremellales</taxon>
        <taxon>Cryptococcaceae</taxon>
        <taxon>Cryptococcus</taxon>
        <taxon>Cryptococcus neoformans species complex</taxon>
    </lineage>
</organism>
<comment type="function">
    <text evidence="1">Component of the spliceosomal U1 snRNP, which is essential for recognition of the pre-mRNA 5' splice-site and the subsequent assembly of the spliceosome. U1-C is directly involved in initial 5' splice-site recognition for both constitutive and regulated alternative splicing. The interaction with the 5' splice-site seems to precede base-pairing between the pre-mRNA and the U1 snRNA. Stimulates commitment or early (E) complex formation by stabilizing the base pairing of the 5' end of the U1 snRNA and the 5' splice-site region.</text>
</comment>
<comment type="subunit">
    <text evidence="1">U1 snRNP is composed of the 7 core Sm proteins B/B', D1, D2, D3, E, F and G that assemble in a heptameric protein ring on the Sm site of the small nuclear RNA to form the core snRNP, and at least 3 U1 snRNP-specific proteins U1-70K, U1-A and U1-C. U1-C interacts with U1 snRNA and the 5' splice-site region of the pre-mRNA.</text>
</comment>
<comment type="subcellular location">
    <subcellularLocation>
        <location evidence="1">Nucleus</location>
    </subcellularLocation>
</comment>
<comment type="similarity">
    <text evidence="1">Belongs to the U1 small nuclear ribonucleoprotein C family.</text>
</comment>
<reference key="1">
    <citation type="journal article" date="2005" name="Science">
        <title>The genome of the basidiomycetous yeast and human pathogen Cryptococcus neoformans.</title>
        <authorList>
            <person name="Loftus B.J."/>
            <person name="Fung E."/>
            <person name="Roncaglia P."/>
            <person name="Rowley D."/>
            <person name="Amedeo P."/>
            <person name="Bruno D."/>
            <person name="Vamathevan J."/>
            <person name="Miranda M."/>
            <person name="Anderson I.J."/>
            <person name="Fraser J.A."/>
            <person name="Allen J.E."/>
            <person name="Bosdet I.E."/>
            <person name="Brent M.R."/>
            <person name="Chiu R."/>
            <person name="Doering T.L."/>
            <person name="Donlin M.J."/>
            <person name="D'Souza C.A."/>
            <person name="Fox D.S."/>
            <person name="Grinberg V."/>
            <person name="Fu J."/>
            <person name="Fukushima M."/>
            <person name="Haas B.J."/>
            <person name="Huang J.C."/>
            <person name="Janbon G."/>
            <person name="Jones S.J.M."/>
            <person name="Koo H.L."/>
            <person name="Krzywinski M.I."/>
            <person name="Kwon-Chung K.J."/>
            <person name="Lengeler K.B."/>
            <person name="Maiti R."/>
            <person name="Marra M.A."/>
            <person name="Marra R.E."/>
            <person name="Mathewson C.A."/>
            <person name="Mitchell T.G."/>
            <person name="Pertea M."/>
            <person name="Riggs F.R."/>
            <person name="Salzberg S.L."/>
            <person name="Schein J.E."/>
            <person name="Shvartsbeyn A."/>
            <person name="Shin H."/>
            <person name="Shumway M."/>
            <person name="Specht C.A."/>
            <person name="Suh B.B."/>
            <person name="Tenney A."/>
            <person name="Utterback T.R."/>
            <person name="Wickes B.L."/>
            <person name="Wortman J.R."/>
            <person name="Wye N.H."/>
            <person name="Kronstad J.W."/>
            <person name="Lodge J.K."/>
            <person name="Heitman J."/>
            <person name="Davis R.W."/>
            <person name="Fraser C.M."/>
            <person name="Hyman R.W."/>
        </authorList>
    </citation>
    <scope>NUCLEOTIDE SEQUENCE [LARGE SCALE GENOMIC DNA]</scope>
    <source>
        <strain>JEC21 / ATCC MYA-565</strain>
    </source>
</reference>
<sequence length="220" mass="22904">MGKYYCDYCDIYLTHDSMNARKAHNSGRNHVANVRDYFAGLGGNQAQSLIDQIIQQHESGGRNQMMMAPSMRLGAGFMNPLATQPGYPGPPPPGAFPTFPPTAGTPPFRPPFPPSSAPGAPPPTMPPFLPPNASAGAAPGIGMGSTPPFPPNTASPNPGMPPFRPPMGMGMPPAPAQAQAQGSPMGMPQQGQQGTFTPTQEVPQGAGAGIHPDRLRMLGQ</sequence>
<name>RU1C_CRYNJ</name>
<dbReference type="EMBL" id="AE017349">
    <property type="protein sequence ID" value="AAW45455.1"/>
    <property type="molecule type" value="Genomic_DNA"/>
</dbReference>
<dbReference type="RefSeq" id="XP_572762.1">
    <property type="nucleotide sequence ID" value="XM_572762.1"/>
</dbReference>
<dbReference type="SMR" id="Q5KC16"/>
<dbReference type="STRING" id="214684.Q5KC16"/>
<dbReference type="PaxDb" id="214684-Q5KC16"/>
<dbReference type="EnsemblFungi" id="AAW45455">
    <property type="protein sequence ID" value="AAW45455"/>
    <property type="gene ID" value="CNI00630"/>
</dbReference>
<dbReference type="GeneID" id="3259503"/>
<dbReference type="KEGG" id="cne:CNI00630"/>
<dbReference type="VEuPathDB" id="FungiDB:CNI00630"/>
<dbReference type="eggNOG" id="KOG3454">
    <property type="taxonomic scope" value="Eukaryota"/>
</dbReference>
<dbReference type="HOGENOM" id="CLU_079697_1_0_1"/>
<dbReference type="InParanoid" id="Q5KC16"/>
<dbReference type="OMA" id="RRIMPRY"/>
<dbReference type="OrthoDB" id="76567at2759"/>
<dbReference type="Proteomes" id="UP000002149">
    <property type="component" value="Chromosome 9"/>
</dbReference>
<dbReference type="GO" id="GO:0000243">
    <property type="term" value="C:commitment complex"/>
    <property type="evidence" value="ECO:0007669"/>
    <property type="project" value="UniProtKB-UniRule"/>
</dbReference>
<dbReference type="GO" id="GO:0005685">
    <property type="term" value="C:U1 snRNP"/>
    <property type="evidence" value="ECO:0000318"/>
    <property type="project" value="GO_Central"/>
</dbReference>
<dbReference type="GO" id="GO:0071004">
    <property type="term" value="C:U2-type prespliceosome"/>
    <property type="evidence" value="ECO:0007669"/>
    <property type="project" value="UniProtKB-UniRule"/>
</dbReference>
<dbReference type="GO" id="GO:0003729">
    <property type="term" value="F:mRNA binding"/>
    <property type="evidence" value="ECO:0007669"/>
    <property type="project" value="UniProtKB-UniRule"/>
</dbReference>
<dbReference type="GO" id="GO:0030627">
    <property type="term" value="F:pre-mRNA 5'-splice site binding"/>
    <property type="evidence" value="ECO:0000318"/>
    <property type="project" value="GO_Central"/>
</dbReference>
<dbReference type="GO" id="GO:0030619">
    <property type="term" value="F:U1 snRNA binding"/>
    <property type="evidence" value="ECO:0007669"/>
    <property type="project" value="UniProtKB-UniRule"/>
</dbReference>
<dbReference type="GO" id="GO:0008270">
    <property type="term" value="F:zinc ion binding"/>
    <property type="evidence" value="ECO:0007669"/>
    <property type="project" value="UniProtKB-UniRule"/>
</dbReference>
<dbReference type="GO" id="GO:0000395">
    <property type="term" value="P:mRNA 5'-splice site recognition"/>
    <property type="evidence" value="ECO:0000318"/>
    <property type="project" value="GO_Central"/>
</dbReference>
<dbReference type="GO" id="GO:0000387">
    <property type="term" value="P:spliceosomal snRNP assembly"/>
    <property type="evidence" value="ECO:0007669"/>
    <property type="project" value="UniProtKB-UniRule"/>
</dbReference>
<dbReference type="FunFam" id="3.30.160.60:FF:000059">
    <property type="entry name" value="U1 small nuclear ribonucleoprotein C"/>
    <property type="match status" value="1"/>
</dbReference>
<dbReference type="Gene3D" id="3.30.160.60">
    <property type="entry name" value="Classic Zinc Finger"/>
    <property type="match status" value="1"/>
</dbReference>
<dbReference type="HAMAP" id="MF_03153">
    <property type="entry name" value="U1_C"/>
    <property type="match status" value="1"/>
</dbReference>
<dbReference type="InterPro" id="IPR000690">
    <property type="entry name" value="Matrin/U1-C_Znf_C2H2"/>
</dbReference>
<dbReference type="InterPro" id="IPR003604">
    <property type="entry name" value="Matrin/U1-like-C_Znf_C2H2"/>
</dbReference>
<dbReference type="InterPro" id="IPR013085">
    <property type="entry name" value="U1-CZ_Znf_C2H2"/>
</dbReference>
<dbReference type="InterPro" id="IPR017340">
    <property type="entry name" value="U1_snRNP-C"/>
</dbReference>
<dbReference type="InterPro" id="IPR036236">
    <property type="entry name" value="Znf_C2H2_sf"/>
</dbReference>
<dbReference type="PANTHER" id="PTHR31148">
    <property type="entry name" value="U1 SMALL NUCLEAR RIBONUCLEOPROTEIN C"/>
    <property type="match status" value="1"/>
</dbReference>
<dbReference type="PANTHER" id="PTHR31148:SF1">
    <property type="entry name" value="U1 SMALL NUCLEAR RIBONUCLEOPROTEIN C"/>
    <property type="match status" value="1"/>
</dbReference>
<dbReference type="Pfam" id="PF06220">
    <property type="entry name" value="zf-U1"/>
    <property type="match status" value="1"/>
</dbReference>
<dbReference type="PIRSF" id="PIRSF037969">
    <property type="entry name" value="U1_snRNP-C"/>
    <property type="match status" value="1"/>
</dbReference>
<dbReference type="SMART" id="SM00451">
    <property type="entry name" value="ZnF_U1"/>
    <property type="match status" value="1"/>
</dbReference>
<dbReference type="SUPFAM" id="SSF57667">
    <property type="entry name" value="beta-beta-alpha zinc fingers"/>
    <property type="match status" value="1"/>
</dbReference>
<dbReference type="PROSITE" id="PS50171">
    <property type="entry name" value="ZF_MATRIN"/>
    <property type="match status" value="1"/>
</dbReference>